<reference key="1">
    <citation type="submission" date="2003-02" db="EMBL/GenBank/DDBJ databases">
        <authorList>
            <person name="Han W."/>
            <person name="Li T."/>
            <person name="Tan Y."/>
            <person name="Shi S."/>
            <person name="Ding P."/>
            <person name="Ma D."/>
        </authorList>
    </citation>
    <scope>NUCLEOTIDE SEQUENCE [MRNA] (ISOFORM 1)</scope>
    <source>
        <tissue>Brain</tissue>
    </source>
</reference>
<reference key="2">
    <citation type="journal article" date="2005" name="Science">
        <title>The transcriptional landscape of the mammalian genome.</title>
        <authorList>
            <person name="Carninci P."/>
            <person name="Kasukawa T."/>
            <person name="Katayama S."/>
            <person name="Gough J."/>
            <person name="Frith M.C."/>
            <person name="Maeda N."/>
            <person name="Oyama R."/>
            <person name="Ravasi T."/>
            <person name="Lenhard B."/>
            <person name="Wells C."/>
            <person name="Kodzius R."/>
            <person name="Shimokawa K."/>
            <person name="Bajic V.B."/>
            <person name="Brenner S.E."/>
            <person name="Batalov S."/>
            <person name="Forrest A.R."/>
            <person name="Zavolan M."/>
            <person name="Davis M.J."/>
            <person name="Wilming L.G."/>
            <person name="Aidinis V."/>
            <person name="Allen J.E."/>
            <person name="Ambesi-Impiombato A."/>
            <person name="Apweiler R."/>
            <person name="Aturaliya R.N."/>
            <person name="Bailey T.L."/>
            <person name="Bansal M."/>
            <person name="Baxter L."/>
            <person name="Beisel K.W."/>
            <person name="Bersano T."/>
            <person name="Bono H."/>
            <person name="Chalk A.M."/>
            <person name="Chiu K.P."/>
            <person name="Choudhary V."/>
            <person name="Christoffels A."/>
            <person name="Clutterbuck D.R."/>
            <person name="Crowe M.L."/>
            <person name="Dalla E."/>
            <person name="Dalrymple B.P."/>
            <person name="de Bono B."/>
            <person name="Della Gatta G."/>
            <person name="di Bernardo D."/>
            <person name="Down T."/>
            <person name="Engstrom P."/>
            <person name="Fagiolini M."/>
            <person name="Faulkner G."/>
            <person name="Fletcher C.F."/>
            <person name="Fukushima T."/>
            <person name="Furuno M."/>
            <person name="Futaki S."/>
            <person name="Gariboldi M."/>
            <person name="Georgii-Hemming P."/>
            <person name="Gingeras T.R."/>
            <person name="Gojobori T."/>
            <person name="Green R.E."/>
            <person name="Gustincich S."/>
            <person name="Harbers M."/>
            <person name="Hayashi Y."/>
            <person name="Hensch T.K."/>
            <person name="Hirokawa N."/>
            <person name="Hill D."/>
            <person name="Huminiecki L."/>
            <person name="Iacono M."/>
            <person name="Ikeo K."/>
            <person name="Iwama A."/>
            <person name="Ishikawa T."/>
            <person name="Jakt M."/>
            <person name="Kanapin A."/>
            <person name="Katoh M."/>
            <person name="Kawasawa Y."/>
            <person name="Kelso J."/>
            <person name="Kitamura H."/>
            <person name="Kitano H."/>
            <person name="Kollias G."/>
            <person name="Krishnan S.P."/>
            <person name="Kruger A."/>
            <person name="Kummerfeld S.K."/>
            <person name="Kurochkin I.V."/>
            <person name="Lareau L.F."/>
            <person name="Lazarevic D."/>
            <person name="Lipovich L."/>
            <person name="Liu J."/>
            <person name="Liuni S."/>
            <person name="McWilliam S."/>
            <person name="Madan Babu M."/>
            <person name="Madera M."/>
            <person name="Marchionni L."/>
            <person name="Matsuda H."/>
            <person name="Matsuzawa S."/>
            <person name="Miki H."/>
            <person name="Mignone F."/>
            <person name="Miyake S."/>
            <person name="Morris K."/>
            <person name="Mottagui-Tabar S."/>
            <person name="Mulder N."/>
            <person name="Nakano N."/>
            <person name="Nakauchi H."/>
            <person name="Ng P."/>
            <person name="Nilsson R."/>
            <person name="Nishiguchi S."/>
            <person name="Nishikawa S."/>
            <person name="Nori F."/>
            <person name="Ohara O."/>
            <person name="Okazaki Y."/>
            <person name="Orlando V."/>
            <person name="Pang K.C."/>
            <person name="Pavan W.J."/>
            <person name="Pavesi G."/>
            <person name="Pesole G."/>
            <person name="Petrovsky N."/>
            <person name="Piazza S."/>
            <person name="Reed J."/>
            <person name="Reid J.F."/>
            <person name="Ring B.Z."/>
            <person name="Ringwald M."/>
            <person name="Rost B."/>
            <person name="Ruan Y."/>
            <person name="Salzberg S.L."/>
            <person name="Sandelin A."/>
            <person name="Schneider C."/>
            <person name="Schoenbach C."/>
            <person name="Sekiguchi K."/>
            <person name="Semple C.A."/>
            <person name="Seno S."/>
            <person name="Sessa L."/>
            <person name="Sheng Y."/>
            <person name="Shibata Y."/>
            <person name="Shimada H."/>
            <person name="Shimada K."/>
            <person name="Silva D."/>
            <person name="Sinclair B."/>
            <person name="Sperling S."/>
            <person name="Stupka E."/>
            <person name="Sugiura K."/>
            <person name="Sultana R."/>
            <person name="Takenaka Y."/>
            <person name="Taki K."/>
            <person name="Tammoja K."/>
            <person name="Tan S.L."/>
            <person name="Tang S."/>
            <person name="Taylor M.S."/>
            <person name="Tegner J."/>
            <person name="Teichmann S.A."/>
            <person name="Ueda H.R."/>
            <person name="van Nimwegen E."/>
            <person name="Verardo R."/>
            <person name="Wei C.L."/>
            <person name="Yagi K."/>
            <person name="Yamanishi H."/>
            <person name="Zabarovsky E."/>
            <person name="Zhu S."/>
            <person name="Zimmer A."/>
            <person name="Hide W."/>
            <person name="Bult C."/>
            <person name="Grimmond S.M."/>
            <person name="Teasdale R.D."/>
            <person name="Liu E.T."/>
            <person name="Brusic V."/>
            <person name="Quackenbush J."/>
            <person name="Wahlestedt C."/>
            <person name="Mattick J.S."/>
            <person name="Hume D.A."/>
            <person name="Kai C."/>
            <person name="Sasaki D."/>
            <person name="Tomaru Y."/>
            <person name="Fukuda S."/>
            <person name="Kanamori-Katayama M."/>
            <person name="Suzuki M."/>
            <person name="Aoki J."/>
            <person name="Arakawa T."/>
            <person name="Iida J."/>
            <person name="Imamura K."/>
            <person name="Itoh M."/>
            <person name="Kato T."/>
            <person name="Kawaji H."/>
            <person name="Kawagashira N."/>
            <person name="Kawashima T."/>
            <person name="Kojima M."/>
            <person name="Kondo S."/>
            <person name="Konno H."/>
            <person name="Nakano K."/>
            <person name="Ninomiya N."/>
            <person name="Nishio T."/>
            <person name="Okada M."/>
            <person name="Plessy C."/>
            <person name="Shibata K."/>
            <person name="Shiraki T."/>
            <person name="Suzuki S."/>
            <person name="Tagami M."/>
            <person name="Waki K."/>
            <person name="Watahiki A."/>
            <person name="Okamura-Oho Y."/>
            <person name="Suzuki H."/>
            <person name="Kawai J."/>
            <person name="Hayashizaki Y."/>
        </authorList>
    </citation>
    <scope>NUCLEOTIDE SEQUENCE [LARGE SCALE MRNA] (ISOFORMS 1 AND 2)</scope>
    <source>
        <strain>C57BL/6J</strain>
        <tissue>Cerebellum</tissue>
        <tissue>Hippocampus</tissue>
    </source>
</reference>
<reference key="3">
    <citation type="journal article" date="2004" name="Genome Res.">
        <title>The status, quality, and expansion of the NIH full-length cDNA project: the Mammalian Gene Collection (MGC).</title>
        <authorList>
            <consortium name="The MGC Project Team"/>
        </authorList>
    </citation>
    <scope>NUCLEOTIDE SEQUENCE [LARGE SCALE MRNA] (ISOFORM 1)</scope>
    <source>
        <tissue>Brain</tissue>
    </source>
</reference>
<reference key="4">
    <citation type="submission" date="2007-04" db="UniProtKB">
        <authorList>
            <person name="Lubec G."/>
            <person name="Kang S.U."/>
        </authorList>
    </citation>
    <scope>PROTEIN SEQUENCE OF 9-27 AND 144-156</scope>
    <scope>IDENTIFICATION BY MASS SPECTROMETRY</scope>
    <source>
        <strain>C57BL/6J</strain>
        <tissue>Brain</tissue>
    </source>
</reference>
<reference key="5">
    <citation type="journal article" date="2010" name="Cell">
        <title>A tissue-specific atlas of mouse protein phosphorylation and expression.</title>
        <authorList>
            <person name="Huttlin E.L."/>
            <person name="Jedrychowski M.P."/>
            <person name="Elias J.E."/>
            <person name="Goswami T."/>
            <person name="Rad R."/>
            <person name="Beausoleil S.A."/>
            <person name="Villen J."/>
            <person name="Haas W."/>
            <person name="Sowa M.E."/>
            <person name="Gygi S.P."/>
        </authorList>
    </citation>
    <scope>IDENTIFICATION BY MASS SPECTROMETRY [LARGE SCALE ANALYSIS]</scope>
    <source>
        <tissue>Brain</tissue>
    </source>
</reference>
<protein>
    <recommendedName>
        <fullName>CKLF-like MARVEL transmembrane domain-containing protein 5</fullName>
    </recommendedName>
    <alternativeName>
        <fullName>Chemokine-like factor superfamily member 5</fullName>
    </alternativeName>
</protein>
<feature type="chain" id="PRO_0000186106" description="CKLF-like MARVEL transmembrane domain-containing protein 5">
    <location>
        <begin position="1"/>
        <end position="156"/>
    </location>
</feature>
<feature type="transmembrane region" description="Helical" evidence="1">
    <location>
        <begin position="35"/>
        <end position="55"/>
    </location>
</feature>
<feature type="transmembrane region" description="Helical" evidence="1">
    <location>
        <begin position="56"/>
        <end position="76"/>
    </location>
</feature>
<feature type="transmembrane region" description="Helical" evidence="1">
    <location>
        <begin position="93"/>
        <end position="113"/>
    </location>
</feature>
<feature type="transmembrane region" description="Helical" evidence="1">
    <location>
        <begin position="119"/>
        <end position="139"/>
    </location>
</feature>
<feature type="domain" description="MARVEL" evidence="2">
    <location>
        <begin position="29"/>
        <end position="146"/>
    </location>
</feature>
<feature type="splice variant" id="VSP_008266" description="In isoform 2." evidence="3">
    <original>LTFIIFICFTASISAYMAAALLEFLITLAFLFLCATQYYQRFDRLNWPCL</original>
    <variation>PQ</variation>
    <location>
        <begin position="44"/>
        <end position="93"/>
    </location>
</feature>
<proteinExistence type="evidence at protein level"/>
<organism>
    <name type="scientific">Mus musculus</name>
    <name type="common">Mouse</name>
    <dbReference type="NCBI Taxonomy" id="10090"/>
    <lineage>
        <taxon>Eukaryota</taxon>
        <taxon>Metazoa</taxon>
        <taxon>Chordata</taxon>
        <taxon>Craniata</taxon>
        <taxon>Vertebrata</taxon>
        <taxon>Euteleostomi</taxon>
        <taxon>Mammalia</taxon>
        <taxon>Eutheria</taxon>
        <taxon>Euarchontoglires</taxon>
        <taxon>Glires</taxon>
        <taxon>Rodentia</taxon>
        <taxon>Myomorpha</taxon>
        <taxon>Muroidea</taxon>
        <taxon>Muridae</taxon>
        <taxon>Murinae</taxon>
        <taxon>Mus</taxon>
        <taxon>Mus</taxon>
    </lineage>
</organism>
<gene>
    <name type="primary">Cmtm5</name>
    <name type="synonym">Cklfsf5</name>
</gene>
<sequence>MFSAWDRRERPPEEGAAAGLQGFGVDKTFLSSLKGILLETELALTFIIFICFTASISAYMAAALLEFLITLAFLFLCATQYYQRFDRLNWPCLDFLRCLSAIVIFLVVSFAAVTSREGAAIAAFVFGIILVSVFAYDAFKIYRTELMPSTTEGDQQ</sequence>
<dbReference type="EMBL" id="AY241867">
    <property type="protein sequence ID" value="AAP33489.1"/>
    <property type="molecule type" value="mRNA"/>
</dbReference>
<dbReference type="EMBL" id="AK005168">
    <property type="protein sequence ID" value="BAB23858.1"/>
    <property type="molecule type" value="mRNA"/>
</dbReference>
<dbReference type="EMBL" id="AK013666">
    <property type="protein sequence ID" value="BAB28947.1"/>
    <property type="molecule type" value="mRNA"/>
</dbReference>
<dbReference type="EMBL" id="BC049665">
    <property type="protein sequence ID" value="AAH49665.1"/>
    <property type="molecule type" value="mRNA"/>
</dbReference>
<dbReference type="CCDS" id="CCDS27105.1">
    <molecule id="Q9D6G9-1"/>
</dbReference>
<dbReference type="RefSeq" id="NP_080342.1">
    <molecule id="Q9D6G9-1"/>
    <property type="nucleotide sequence ID" value="NM_026066.2"/>
</dbReference>
<dbReference type="RefSeq" id="XP_017171651.1">
    <property type="nucleotide sequence ID" value="XM_017316162.1"/>
</dbReference>
<dbReference type="SMR" id="Q9D6G9"/>
<dbReference type="BioGRID" id="212063">
    <property type="interactions" value="1"/>
</dbReference>
<dbReference type="FunCoup" id="Q9D6G9">
    <property type="interactions" value="240"/>
</dbReference>
<dbReference type="IntAct" id="Q9D6G9">
    <property type="interactions" value="2"/>
</dbReference>
<dbReference type="MINT" id="Q9D6G9"/>
<dbReference type="STRING" id="10090.ENSMUSP00000036138"/>
<dbReference type="iPTMnet" id="Q9D6G9"/>
<dbReference type="PhosphoSitePlus" id="Q9D6G9"/>
<dbReference type="SwissPalm" id="Q9D6G9"/>
<dbReference type="PaxDb" id="10090-ENSMUSP00000036138"/>
<dbReference type="ProteomicsDB" id="281632">
    <molecule id="Q9D6G9-1"/>
</dbReference>
<dbReference type="ProteomicsDB" id="281633">
    <molecule id="Q9D6G9-2"/>
</dbReference>
<dbReference type="Antibodypedia" id="22460">
    <property type="antibodies" value="226 antibodies from 26 providers"/>
</dbReference>
<dbReference type="DNASU" id="67272"/>
<dbReference type="Ensembl" id="ENSMUST00000037814.8">
    <molecule id="Q9D6G9-1"/>
    <property type="protein sequence ID" value="ENSMUSP00000036138.7"/>
    <property type="gene ID" value="ENSMUSG00000040759.10"/>
</dbReference>
<dbReference type="GeneID" id="67272"/>
<dbReference type="KEGG" id="mmu:67272"/>
<dbReference type="UCSC" id="uc007txo.1">
    <molecule id="Q9D6G9-1"/>
    <property type="organism name" value="mouse"/>
</dbReference>
<dbReference type="AGR" id="MGI:2447164"/>
<dbReference type="CTD" id="116173"/>
<dbReference type="MGI" id="MGI:2447164">
    <property type="gene designation" value="Cmtm5"/>
</dbReference>
<dbReference type="VEuPathDB" id="HostDB:ENSMUSG00000040759"/>
<dbReference type="eggNOG" id="KOG4788">
    <property type="taxonomic scope" value="Eukaryota"/>
</dbReference>
<dbReference type="GeneTree" id="ENSGT00940000161867"/>
<dbReference type="HOGENOM" id="CLU_108546_0_0_1"/>
<dbReference type="InParanoid" id="Q9D6G9"/>
<dbReference type="OMA" id="WHTPAAV"/>
<dbReference type="OrthoDB" id="10028364at2759"/>
<dbReference type="PhylomeDB" id="Q9D6G9"/>
<dbReference type="TreeFam" id="TF317387"/>
<dbReference type="BioGRID-ORCS" id="67272">
    <property type="hits" value="1 hit in 78 CRISPR screens"/>
</dbReference>
<dbReference type="ChiTaRS" id="Cmtm5">
    <property type="organism name" value="mouse"/>
</dbReference>
<dbReference type="PRO" id="PR:Q9D6G9"/>
<dbReference type="Proteomes" id="UP000000589">
    <property type="component" value="Chromosome 14"/>
</dbReference>
<dbReference type="RNAct" id="Q9D6G9">
    <property type="molecule type" value="protein"/>
</dbReference>
<dbReference type="Bgee" id="ENSMUSG00000040759">
    <property type="expression patterns" value="Expressed in cerebellar nuclear complex and 151 other cell types or tissues"/>
</dbReference>
<dbReference type="ExpressionAtlas" id="Q9D6G9">
    <property type="expression patterns" value="baseline and differential"/>
</dbReference>
<dbReference type="GO" id="GO:0005615">
    <property type="term" value="C:extracellular space"/>
    <property type="evidence" value="ECO:0007669"/>
    <property type="project" value="UniProtKB-KW"/>
</dbReference>
<dbReference type="GO" id="GO:0016020">
    <property type="term" value="C:membrane"/>
    <property type="evidence" value="ECO:0007669"/>
    <property type="project" value="UniProtKB-SubCell"/>
</dbReference>
<dbReference type="GO" id="GO:0005125">
    <property type="term" value="F:cytokine activity"/>
    <property type="evidence" value="ECO:0007669"/>
    <property type="project" value="UniProtKB-KW"/>
</dbReference>
<dbReference type="GO" id="GO:0006935">
    <property type="term" value="P:chemotaxis"/>
    <property type="evidence" value="ECO:0007669"/>
    <property type="project" value="UniProtKB-KW"/>
</dbReference>
<dbReference type="GO" id="GO:0045662">
    <property type="term" value="P:negative regulation of myoblast differentiation"/>
    <property type="evidence" value="ECO:0000315"/>
    <property type="project" value="MGI"/>
</dbReference>
<dbReference type="InterPro" id="IPR008253">
    <property type="entry name" value="Marvel"/>
</dbReference>
<dbReference type="InterPro" id="IPR050578">
    <property type="entry name" value="MARVEL-CKLF_proteins"/>
</dbReference>
<dbReference type="PANTHER" id="PTHR22776:SF26">
    <property type="entry name" value="CKLF-LIKE MARVEL TRANSMEMBRANE DOMAIN-CONTAINING PROTEIN 5"/>
    <property type="match status" value="1"/>
</dbReference>
<dbReference type="PANTHER" id="PTHR22776">
    <property type="entry name" value="MARVEL-CONTAINING POTENTIAL LIPID RAFT-ASSOCIATED PROTEIN"/>
    <property type="match status" value="1"/>
</dbReference>
<dbReference type="Pfam" id="PF01284">
    <property type="entry name" value="MARVEL"/>
    <property type="match status" value="1"/>
</dbReference>
<dbReference type="PROSITE" id="PS51225">
    <property type="entry name" value="MARVEL"/>
    <property type="match status" value="1"/>
</dbReference>
<comment type="subcellular location">
    <subcellularLocation>
        <location>Membrane</location>
        <topology>Multi-pass membrane protein</topology>
    </subcellularLocation>
</comment>
<comment type="alternative products">
    <event type="alternative splicing"/>
    <isoform>
        <id>Q9D6G9-1</id>
        <name>1</name>
        <sequence type="displayed"/>
    </isoform>
    <isoform>
        <id>Q9D6G9-2</id>
        <name>2</name>
        <sequence type="described" ref="VSP_008266"/>
    </isoform>
</comment>
<comment type="similarity">
    <text evidence="4">Belongs to the chemokine-like factor family.</text>
</comment>
<accession>Q9D6G9</accession>
<accession>Q9DB66</accession>
<evidence type="ECO:0000255" key="1"/>
<evidence type="ECO:0000255" key="2">
    <source>
        <dbReference type="PROSITE-ProRule" id="PRU00581"/>
    </source>
</evidence>
<evidence type="ECO:0000303" key="3">
    <source>
    </source>
</evidence>
<evidence type="ECO:0000305" key="4"/>
<keyword id="KW-0025">Alternative splicing</keyword>
<keyword id="KW-0145">Chemotaxis</keyword>
<keyword id="KW-0202">Cytokine</keyword>
<keyword id="KW-0903">Direct protein sequencing</keyword>
<keyword id="KW-0472">Membrane</keyword>
<keyword id="KW-1185">Reference proteome</keyword>
<keyword id="KW-0812">Transmembrane</keyword>
<keyword id="KW-1133">Transmembrane helix</keyword>
<name>CKLF5_MOUSE</name>